<evidence type="ECO:0000255" key="1">
    <source>
        <dbReference type="HAMAP-Rule" id="MF_01080"/>
    </source>
</evidence>
<proteinExistence type="inferred from homology"/>
<comment type="function">
    <text evidence="1">Responsible for synthesis of pseudouridine from uracil-55 in the psi GC loop of transfer RNAs.</text>
</comment>
<comment type="catalytic activity">
    <reaction evidence="1">
        <text>uridine(55) in tRNA = pseudouridine(55) in tRNA</text>
        <dbReference type="Rhea" id="RHEA:42532"/>
        <dbReference type="Rhea" id="RHEA-COMP:10101"/>
        <dbReference type="Rhea" id="RHEA-COMP:10102"/>
        <dbReference type="ChEBI" id="CHEBI:65314"/>
        <dbReference type="ChEBI" id="CHEBI:65315"/>
        <dbReference type="EC" id="5.4.99.25"/>
    </reaction>
</comment>
<comment type="similarity">
    <text evidence="1">Belongs to the pseudouridine synthase TruB family. Type 1 subfamily.</text>
</comment>
<protein>
    <recommendedName>
        <fullName evidence="1">tRNA pseudouridine synthase B</fullName>
        <ecNumber evidence="1">5.4.99.25</ecNumber>
    </recommendedName>
    <alternativeName>
        <fullName evidence="1">tRNA pseudouridine(55) synthase</fullName>
        <shortName evidence="1">Psi55 synthase</shortName>
    </alternativeName>
    <alternativeName>
        <fullName evidence="1">tRNA pseudouridylate synthase</fullName>
    </alternativeName>
    <alternativeName>
        <fullName evidence="1">tRNA-uridine isomerase</fullName>
    </alternativeName>
</protein>
<sequence>MKASKQFRHQRRIVDGVLLLDKPRGLTSNAALQTARRLLNAAKAGHTGTLDPMATGLLPLTLGEATKFSQMLLDADKAYEATVRLGIETDTGDAEGAAIATAPVHVTDDSIRQALAALTGEIEQVPPMYSALKRDGKPLYEYARAGIEVERAARPVTIHSLELLGVEGDSLRIRVDCSKGTYVRTLAIDLGRLLGCGGHLTELRRTRIGPFNVDEAVTLTALEALPAESRVGLLAPVDALVGHLPRIELDAFQAGLLLQGRVLAAPCGAAGLVRIYGEGRYLGLGECDGNGTLSPKRLVSTVATAQQS</sequence>
<feature type="chain" id="PRO_0000121782" description="tRNA pseudouridine synthase B">
    <location>
        <begin position="1"/>
        <end position="308"/>
    </location>
</feature>
<feature type="active site" description="Nucleophile" evidence="1">
    <location>
        <position position="51"/>
    </location>
</feature>
<name>TRUB_AROAE</name>
<keyword id="KW-0413">Isomerase</keyword>
<keyword id="KW-1185">Reference proteome</keyword>
<keyword id="KW-0819">tRNA processing</keyword>
<dbReference type="EC" id="5.4.99.25" evidence="1"/>
<dbReference type="EMBL" id="CR555306">
    <property type="protein sequence ID" value="CAI09445.1"/>
    <property type="molecule type" value="Genomic_DNA"/>
</dbReference>
<dbReference type="RefSeq" id="WP_011239108.1">
    <property type="nucleotide sequence ID" value="NC_006513.1"/>
</dbReference>
<dbReference type="SMR" id="Q5NZR9"/>
<dbReference type="STRING" id="76114.ebA5843"/>
<dbReference type="KEGG" id="eba:ebA5843"/>
<dbReference type="eggNOG" id="COG0130">
    <property type="taxonomic scope" value="Bacteria"/>
</dbReference>
<dbReference type="HOGENOM" id="CLU_032087_0_3_4"/>
<dbReference type="OrthoDB" id="9802309at2"/>
<dbReference type="Proteomes" id="UP000006552">
    <property type="component" value="Chromosome"/>
</dbReference>
<dbReference type="GO" id="GO:0003723">
    <property type="term" value="F:RNA binding"/>
    <property type="evidence" value="ECO:0007669"/>
    <property type="project" value="InterPro"/>
</dbReference>
<dbReference type="GO" id="GO:0160148">
    <property type="term" value="F:tRNA pseudouridine(55) synthase activity"/>
    <property type="evidence" value="ECO:0007669"/>
    <property type="project" value="UniProtKB-EC"/>
</dbReference>
<dbReference type="GO" id="GO:1990481">
    <property type="term" value="P:mRNA pseudouridine synthesis"/>
    <property type="evidence" value="ECO:0007669"/>
    <property type="project" value="TreeGrafter"/>
</dbReference>
<dbReference type="GO" id="GO:0031119">
    <property type="term" value="P:tRNA pseudouridine synthesis"/>
    <property type="evidence" value="ECO:0007669"/>
    <property type="project" value="UniProtKB-UniRule"/>
</dbReference>
<dbReference type="CDD" id="cd02573">
    <property type="entry name" value="PseudoU_synth_EcTruB"/>
    <property type="match status" value="1"/>
</dbReference>
<dbReference type="CDD" id="cd21152">
    <property type="entry name" value="PUA_TruB_bacterial"/>
    <property type="match status" value="1"/>
</dbReference>
<dbReference type="FunFam" id="3.30.2350.10:FF:000011">
    <property type="entry name" value="tRNA pseudouridine synthase B"/>
    <property type="match status" value="1"/>
</dbReference>
<dbReference type="Gene3D" id="3.30.2350.10">
    <property type="entry name" value="Pseudouridine synthase"/>
    <property type="match status" value="1"/>
</dbReference>
<dbReference type="Gene3D" id="2.30.130.10">
    <property type="entry name" value="PUA domain"/>
    <property type="match status" value="1"/>
</dbReference>
<dbReference type="HAMAP" id="MF_01080">
    <property type="entry name" value="TruB_bact"/>
    <property type="match status" value="1"/>
</dbReference>
<dbReference type="InterPro" id="IPR020103">
    <property type="entry name" value="PsdUridine_synth_cat_dom_sf"/>
</dbReference>
<dbReference type="InterPro" id="IPR002501">
    <property type="entry name" value="PsdUridine_synth_N"/>
</dbReference>
<dbReference type="InterPro" id="IPR015947">
    <property type="entry name" value="PUA-like_sf"/>
</dbReference>
<dbReference type="InterPro" id="IPR036974">
    <property type="entry name" value="PUA_sf"/>
</dbReference>
<dbReference type="InterPro" id="IPR014780">
    <property type="entry name" value="tRNA_psdUridine_synth_TruB"/>
</dbReference>
<dbReference type="InterPro" id="IPR015240">
    <property type="entry name" value="tRNA_sdUridine_synth_fam1_C"/>
</dbReference>
<dbReference type="InterPro" id="IPR032819">
    <property type="entry name" value="TruB_C"/>
</dbReference>
<dbReference type="NCBIfam" id="TIGR00431">
    <property type="entry name" value="TruB"/>
    <property type="match status" value="1"/>
</dbReference>
<dbReference type="PANTHER" id="PTHR13767:SF2">
    <property type="entry name" value="PSEUDOURIDYLATE SYNTHASE TRUB1"/>
    <property type="match status" value="1"/>
</dbReference>
<dbReference type="PANTHER" id="PTHR13767">
    <property type="entry name" value="TRNA-PSEUDOURIDINE SYNTHASE"/>
    <property type="match status" value="1"/>
</dbReference>
<dbReference type="Pfam" id="PF09157">
    <property type="entry name" value="TruB-C_2"/>
    <property type="match status" value="1"/>
</dbReference>
<dbReference type="Pfam" id="PF16198">
    <property type="entry name" value="TruB_C_2"/>
    <property type="match status" value="1"/>
</dbReference>
<dbReference type="Pfam" id="PF01509">
    <property type="entry name" value="TruB_N"/>
    <property type="match status" value="1"/>
</dbReference>
<dbReference type="SUPFAM" id="SSF55120">
    <property type="entry name" value="Pseudouridine synthase"/>
    <property type="match status" value="1"/>
</dbReference>
<dbReference type="SUPFAM" id="SSF88697">
    <property type="entry name" value="PUA domain-like"/>
    <property type="match status" value="1"/>
</dbReference>
<reference key="1">
    <citation type="journal article" date="2005" name="Arch. Microbiol.">
        <title>The genome sequence of an anaerobic aromatic-degrading denitrifying bacterium, strain EbN1.</title>
        <authorList>
            <person name="Rabus R."/>
            <person name="Kube M."/>
            <person name="Heider J."/>
            <person name="Beck A."/>
            <person name="Heitmann K."/>
            <person name="Widdel F."/>
            <person name="Reinhardt R."/>
        </authorList>
    </citation>
    <scope>NUCLEOTIDE SEQUENCE [LARGE SCALE GENOMIC DNA]</scope>
    <source>
        <strain>DSM 19018 / LMG 30748 / EbN1</strain>
    </source>
</reference>
<organism>
    <name type="scientific">Aromatoleum aromaticum (strain DSM 19018 / LMG 30748 / EbN1)</name>
    <name type="common">Azoarcus sp. (strain EbN1)</name>
    <dbReference type="NCBI Taxonomy" id="76114"/>
    <lineage>
        <taxon>Bacteria</taxon>
        <taxon>Pseudomonadati</taxon>
        <taxon>Pseudomonadota</taxon>
        <taxon>Betaproteobacteria</taxon>
        <taxon>Rhodocyclales</taxon>
        <taxon>Rhodocyclaceae</taxon>
        <taxon>Aromatoleum</taxon>
    </lineage>
</organism>
<accession>Q5NZR9</accession>
<gene>
    <name evidence="1" type="primary">truB</name>
    <name type="ordered locus">AZOSEA33200</name>
    <name type="ORF">ebA5843</name>
</gene>